<reference key="1">
    <citation type="journal article" date="2007" name="Nature">
        <title>Evolution of genes and genomes on the Drosophila phylogeny.</title>
        <authorList>
            <consortium name="Drosophila 12 genomes consortium"/>
        </authorList>
    </citation>
    <scope>NUCLEOTIDE SEQUENCE [LARGE SCALE GENOMIC DNA]</scope>
    <source>
        <strain>Tucson 14024-0371.13</strain>
    </source>
</reference>
<feature type="chain" id="PRO_0000391967" description="Ubiquitin-fold modifier-conjugating enzyme 1">
    <location>
        <begin position="1"/>
        <end position="164"/>
    </location>
</feature>
<feature type="active site" description="Glycyl thioester intermediate" evidence="1">
    <location>
        <position position="116"/>
    </location>
</feature>
<accession>B3MC02</accession>
<organism>
    <name type="scientific">Drosophila ananassae</name>
    <name type="common">Fruit fly</name>
    <dbReference type="NCBI Taxonomy" id="7217"/>
    <lineage>
        <taxon>Eukaryota</taxon>
        <taxon>Metazoa</taxon>
        <taxon>Ecdysozoa</taxon>
        <taxon>Arthropoda</taxon>
        <taxon>Hexapoda</taxon>
        <taxon>Insecta</taxon>
        <taxon>Pterygota</taxon>
        <taxon>Neoptera</taxon>
        <taxon>Endopterygota</taxon>
        <taxon>Diptera</taxon>
        <taxon>Brachycera</taxon>
        <taxon>Muscomorpha</taxon>
        <taxon>Ephydroidea</taxon>
        <taxon>Drosophilidae</taxon>
        <taxon>Drosophila</taxon>
        <taxon>Sophophora</taxon>
    </lineage>
</organism>
<name>UFC1_DROAN</name>
<dbReference type="EMBL" id="CH902619">
    <property type="protein sequence ID" value="EDV37189.1"/>
    <property type="molecule type" value="Genomic_DNA"/>
</dbReference>
<dbReference type="SMR" id="B3MC02"/>
<dbReference type="FunCoup" id="B3MC02">
    <property type="interactions" value="1527"/>
</dbReference>
<dbReference type="STRING" id="7217.B3MC02"/>
<dbReference type="EnsemblMetazoa" id="FBtr0118028">
    <property type="protein sequence ID" value="FBpp0116520"/>
    <property type="gene ID" value="FBgn0090360"/>
</dbReference>
<dbReference type="EnsemblMetazoa" id="XM_001960331.4">
    <property type="protein sequence ID" value="XP_001960367.1"/>
    <property type="gene ID" value="LOC6496170"/>
</dbReference>
<dbReference type="GeneID" id="6496170"/>
<dbReference type="KEGG" id="dan:6496170"/>
<dbReference type="CTD" id="51506"/>
<dbReference type="eggNOG" id="KOG3357">
    <property type="taxonomic scope" value="Eukaryota"/>
</dbReference>
<dbReference type="HOGENOM" id="CLU_101170_0_0_1"/>
<dbReference type="InParanoid" id="B3MC02"/>
<dbReference type="OMA" id="LWQKNVP"/>
<dbReference type="OrthoDB" id="10256182at2759"/>
<dbReference type="PhylomeDB" id="B3MC02"/>
<dbReference type="Proteomes" id="UP000007801">
    <property type="component" value="Unassembled WGS sequence"/>
</dbReference>
<dbReference type="GO" id="GO:0005737">
    <property type="term" value="C:cytoplasm"/>
    <property type="evidence" value="ECO:0007669"/>
    <property type="project" value="TreeGrafter"/>
</dbReference>
<dbReference type="GO" id="GO:0061657">
    <property type="term" value="F:UFM1 conjugating enzyme activity"/>
    <property type="evidence" value="ECO:0007669"/>
    <property type="project" value="InterPro"/>
</dbReference>
<dbReference type="GO" id="GO:1990592">
    <property type="term" value="P:protein K69-linked ufmylation"/>
    <property type="evidence" value="ECO:0007669"/>
    <property type="project" value="TreeGrafter"/>
</dbReference>
<dbReference type="CDD" id="cd11686">
    <property type="entry name" value="UBCc_UFC1"/>
    <property type="match status" value="1"/>
</dbReference>
<dbReference type="FunFam" id="3.10.110.10:FF:000042">
    <property type="entry name" value="Ubiquitin-fold modifier-conjugating enzyme 1"/>
    <property type="match status" value="1"/>
</dbReference>
<dbReference type="Gene3D" id="3.10.110.10">
    <property type="entry name" value="Ubiquitin Conjugating Enzyme"/>
    <property type="match status" value="1"/>
</dbReference>
<dbReference type="InterPro" id="IPR016135">
    <property type="entry name" value="UBQ-conjugating_enzyme/RWD"/>
</dbReference>
<dbReference type="InterPro" id="IPR014806">
    <property type="entry name" value="Ufc1"/>
</dbReference>
<dbReference type="PANTHER" id="PTHR12921">
    <property type="entry name" value="UBIQUITIN-FOLD MODIFIER-CONJUGATING ENZYME 1"/>
    <property type="match status" value="1"/>
</dbReference>
<dbReference type="PANTHER" id="PTHR12921:SF0">
    <property type="entry name" value="UBIQUITIN-FOLD MODIFIER-CONJUGATING ENZYME 1"/>
    <property type="match status" value="1"/>
</dbReference>
<dbReference type="Pfam" id="PF08694">
    <property type="entry name" value="UFC1"/>
    <property type="match status" value="1"/>
</dbReference>
<dbReference type="PIRSF" id="PIRSF008716">
    <property type="entry name" value="DUF1782"/>
    <property type="match status" value="1"/>
</dbReference>
<dbReference type="SUPFAM" id="SSF54495">
    <property type="entry name" value="UBC-like"/>
    <property type="match status" value="1"/>
</dbReference>
<comment type="function">
    <text evidence="1">E2-like enzyme which forms an intermediate with UFM1 via a thioester linkage.</text>
</comment>
<comment type="similarity">
    <text evidence="2">Belongs to the ubiquitin-conjugating enzyme family. UFC1 subfamily.</text>
</comment>
<keyword id="KW-1185">Reference proteome</keyword>
<keyword id="KW-0833">Ubl conjugation pathway</keyword>
<gene>
    <name type="ORF">GF13328</name>
</gene>
<proteinExistence type="inferred from homology"/>
<sequence length="164" mass="19063">MVDDSTRKTLSNIPLLQIRAGPREKDVWVQRLKEEYQSLIKYVENNKQSGSDWFRLESNKEGTKWFGKCWYMHELLRYEFDVEFDIPVTYPTTAPEIALPELDGKTAKMYRGGKICLTDHFKPLWARNVPKFGIAHAMALGLAPWLAVEIPDLIEKGIITYKEK</sequence>
<protein>
    <recommendedName>
        <fullName>Ubiquitin-fold modifier-conjugating enzyme 1</fullName>
    </recommendedName>
    <alternativeName>
        <fullName>Ufm1-conjugating enzyme 1</fullName>
    </alternativeName>
</protein>
<evidence type="ECO:0000250" key="1"/>
<evidence type="ECO:0000305" key="2"/>